<comment type="function">
    <text evidence="1">GTPase that plays an essential role in the late steps of ribosome biogenesis.</text>
</comment>
<comment type="subunit">
    <text evidence="1">Associates with the 50S ribosomal subunit.</text>
</comment>
<comment type="similarity">
    <text evidence="1">Belongs to the TRAFAC class TrmE-Era-EngA-EngB-Septin-like GTPase superfamily. EngA (Der) GTPase family.</text>
</comment>
<evidence type="ECO:0000255" key="1">
    <source>
        <dbReference type="HAMAP-Rule" id="MF_00195"/>
    </source>
</evidence>
<gene>
    <name evidence="1" type="primary">der</name>
    <name type="synonym">engA</name>
    <name type="ordered locus">Bxeno_A2819</name>
    <name type="ORF">Bxe_A1598</name>
</gene>
<organism>
    <name type="scientific">Paraburkholderia xenovorans (strain LB400)</name>
    <dbReference type="NCBI Taxonomy" id="266265"/>
    <lineage>
        <taxon>Bacteria</taxon>
        <taxon>Pseudomonadati</taxon>
        <taxon>Pseudomonadota</taxon>
        <taxon>Betaproteobacteria</taxon>
        <taxon>Burkholderiales</taxon>
        <taxon>Burkholderiaceae</taxon>
        <taxon>Paraburkholderia</taxon>
    </lineage>
</organism>
<proteinExistence type="inferred from homology"/>
<name>DER_PARXL</name>
<protein>
    <recommendedName>
        <fullName evidence="1">GTPase Der</fullName>
    </recommendedName>
    <alternativeName>
        <fullName evidence="1">GTP-binding protein EngA</fullName>
    </alternativeName>
</protein>
<accession>Q13X32</accession>
<feature type="chain" id="PRO_1000011588" description="GTPase Der">
    <location>
        <begin position="1"/>
        <end position="445"/>
    </location>
</feature>
<feature type="domain" description="EngA-type G 1">
    <location>
        <begin position="3"/>
        <end position="167"/>
    </location>
</feature>
<feature type="domain" description="EngA-type G 2">
    <location>
        <begin position="180"/>
        <end position="353"/>
    </location>
</feature>
<feature type="domain" description="KH-like" evidence="1">
    <location>
        <begin position="354"/>
        <end position="438"/>
    </location>
</feature>
<feature type="binding site" evidence="1">
    <location>
        <begin position="9"/>
        <end position="16"/>
    </location>
    <ligand>
        <name>GTP</name>
        <dbReference type="ChEBI" id="CHEBI:37565"/>
        <label>1</label>
    </ligand>
</feature>
<feature type="binding site" evidence="1">
    <location>
        <begin position="56"/>
        <end position="60"/>
    </location>
    <ligand>
        <name>GTP</name>
        <dbReference type="ChEBI" id="CHEBI:37565"/>
        <label>1</label>
    </ligand>
</feature>
<feature type="binding site" evidence="1">
    <location>
        <begin position="119"/>
        <end position="122"/>
    </location>
    <ligand>
        <name>GTP</name>
        <dbReference type="ChEBI" id="CHEBI:37565"/>
        <label>1</label>
    </ligand>
</feature>
<feature type="binding site" evidence="1">
    <location>
        <begin position="186"/>
        <end position="193"/>
    </location>
    <ligand>
        <name>GTP</name>
        <dbReference type="ChEBI" id="CHEBI:37565"/>
        <label>2</label>
    </ligand>
</feature>
<feature type="binding site" evidence="1">
    <location>
        <begin position="233"/>
        <end position="237"/>
    </location>
    <ligand>
        <name>GTP</name>
        <dbReference type="ChEBI" id="CHEBI:37565"/>
        <label>2</label>
    </ligand>
</feature>
<feature type="binding site" evidence="1">
    <location>
        <begin position="298"/>
        <end position="301"/>
    </location>
    <ligand>
        <name>GTP</name>
        <dbReference type="ChEBI" id="CHEBI:37565"/>
        <label>2</label>
    </ligand>
</feature>
<sequence length="445" mass="49177">MKPVIALVGRPNVGKSTLFNRLTRSRDALVADLPGLTRDRHYGEGRTGERPYLVVDTGGFEPVAKDGILHEMARQTRQAVEESDIVVFIVDGRNGLAPQDKSIADYLRKVGRPIFLVVNKAEGMKYSTVAADFYELGLGDPRAISAAHGDGVTEMINEALEVAYAGQPEENDDEKAARGVKIAIVGRPNVGKSTLINALVGEERVIAFDMPGTTRDSIYVDFERGGKPYTLIDTAGLRRRGKVFEAIEKFSVVKTLQSISDANVVILLLDARQDISEQDAHIAGFVVEQGRALVVGVNKWDGLDPHVRERTKADLERKLKFLDFAKFHFISAAEKTGIGPLMRSVDDAYAAAMAKLPTPKLTRALIDAVEFQQPRRRGPVRPKLRYAHQGGQNPPIIVIHGNALDAITETYKRYLENRFRETFKLTGTPLRIEFRSSTNPYADKA</sequence>
<dbReference type="EMBL" id="CP000270">
    <property type="protein sequence ID" value="ABE31357.1"/>
    <property type="molecule type" value="Genomic_DNA"/>
</dbReference>
<dbReference type="RefSeq" id="WP_011488940.1">
    <property type="nucleotide sequence ID" value="NC_007951.1"/>
</dbReference>
<dbReference type="SMR" id="Q13X32"/>
<dbReference type="STRING" id="266265.Bxe_A1598"/>
<dbReference type="KEGG" id="bxb:DR64_3758"/>
<dbReference type="KEGG" id="bxe:Bxe_A1598"/>
<dbReference type="PATRIC" id="fig|266265.5.peg.2959"/>
<dbReference type="eggNOG" id="COG1160">
    <property type="taxonomic scope" value="Bacteria"/>
</dbReference>
<dbReference type="OrthoDB" id="9805918at2"/>
<dbReference type="Proteomes" id="UP000001817">
    <property type="component" value="Chromosome 1"/>
</dbReference>
<dbReference type="GO" id="GO:0016887">
    <property type="term" value="F:ATP hydrolysis activity"/>
    <property type="evidence" value="ECO:0007669"/>
    <property type="project" value="InterPro"/>
</dbReference>
<dbReference type="GO" id="GO:0005525">
    <property type="term" value="F:GTP binding"/>
    <property type="evidence" value="ECO:0007669"/>
    <property type="project" value="UniProtKB-UniRule"/>
</dbReference>
<dbReference type="GO" id="GO:0043022">
    <property type="term" value="F:ribosome binding"/>
    <property type="evidence" value="ECO:0007669"/>
    <property type="project" value="TreeGrafter"/>
</dbReference>
<dbReference type="GO" id="GO:0042254">
    <property type="term" value="P:ribosome biogenesis"/>
    <property type="evidence" value="ECO:0007669"/>
    <property type="project" value="UniProtKB-KW"/>
</dbReference>
<dbReference type="CDD" id="cd01894">
    <property type="entry name" value="EngA1"/>
    <property type="match status" value="1"/>
</dbReference>
<dbReference type="CDD" id="cd01895">
    <property type="entry name" value="EngA2"/>
    <property type="match status" value="1"/>
</dbReference>
<dbReference type="FunFam" id="3.30.300.20:FF:000004">
    <property type="entry name" value="GTPase Der"/>
    <property type="match status" value="1"/>
</dbReference>
<dbReference type="FunFam" id="3.40.50.300:FF:000040">
    <property type="entry name" value="GTPase Der"/>
    <property type="match status" value="1"/>
</dbReference>
<dbReference type="FunFam" id="3.40.50.300:FF:000057">
    <property type="entry name" value="GTPase Der"/>
    <property type="match status" value="1"/>
</dbReference>
<dbReference type="Gene3D" id="3.30.300.20">
    <property type="match status" value="1"/>
</dbReference>
<dbReference type="Gene3D" id="3.40.50.300">
    <property type="entry name" value="P-loop containing nucleotide triphosphate hydrolases"/>
    <property type="match status" value="2"/>
</dbReference>
<dbReference type="HAMAP" id="MF_00195">
    <property type="entry name" value="GTPase_Der"/>
    <property type="match status" value="1"/>
</dbReference>
<dbReference type="InterPro" id="IPR003593">
    <property type="entry name" value="AAA+_ATPase"/>
</dbReference>
<dbReference type="InterPro" id="IPR031166">
    <property type="entry name" value="G_ENGA"/>
</dbReference>
<dbReference type="InterPro" id="IPR006073">
    <property type="entry name" value="GTP-bd"/>
</dbReference>
<dbReference type="InterPro" id="IPR016484">
    <property type="entry name" value="GTPase_Der"/>
</dbReference>
<dbReference type="InterPro" id="IPR032859">
    <property type="entry name" value="KH_dom-like"/>
</dbReference>
<dbReference type="InterPro" id="IPR015946">
    <property type="entry name" value="KH_dom-like_a/b"/>
</dbReference>
<dbReference type="InterPro" id="IPR027417">
    <property type="entry name" value="P-loop_NTPase"/>
</dbReference>
<dbReference type="InterPro" id="IPR005225">
    <property type="entry name" value="Small_GTP-bd"/>
</dbReference>
<dbReference type="NCBIfam" id="TIGR03594">
    <property type="entry name" value="GTPase_EngA"/>
    <property type="match status" value="1"/>
</dbReference>
<dbReference type="NCBIfam" id="TIGR00231">
    <property type="entry name" value="small_GTP"/>
    <property type="match status" value="2"/>
</dbReference>
<dbReference type="PANTHER" id="PTHR43834">
    <property type="entry name" value="GTPASE DER"/>
    <property type="match status" value="1"/>
</dbReference>
<dbReference type="PANTHER" id="PTHR43834:SF6">
    <property type="entry name" value="GTPASE DER"/>
    <property type="match status" value="1"/>
</dbReference>
<dbReference type="Pfam" id="PF14714">
    <property type="entry name" value="KH_dom-like"/>
    <property type="match status" value="1"/>
</dbReference>
<dbReference type="Pfam" id="PF01926">
    <property type="entry name" value="MMR_HSR1"/>
    <property type="match status" value="2"/>
</dbReference>
<dbReference type="PIRSF" id="PIRSF006485">
    <property type="entry name" value="GTP-binding_EngA"/>
    <property type="match status" value="1"/>
</dbReference>
<dbReference type="PRINTS" id="PR00326">
    <property type="entry name" value="GTP1OBG"/>
</dbReference>
<dbReference type="SMART" id="SM00382">
    <property type="entry name" value="AAA"/>
    <property type="match status" value="2"/>
</dbReference>
<dbReference type="SUPFAM" id="SSF52540">
    <property type="entry name" value="P-loop containing nucleoside triphosphate hydrolases"/>
    <property type="match status" value="2"/>
</dbReference>
<dbReference type="PROSITE" id="PS51712">
    <property type="entry name" value="G_ENGA"/>
    <property type="match status" value="2"/>
</dbReference>
<reference key="1">
    <citation type="journal article" date="2006" name="Proc. Natl. Acad. Sci. U.S.A.">
        <title>Burkholderia xenovorans LB400 harbors a multi-replicon, 9.73-Mbp genome shaped for versatility.</title>
        <authorList>
            <person name="Chain P.S.G."/>
            <person name="Denef V.J."/>
            <person name="Konstantinidis K.T."/>
            <person name="Vergez L.M."/>
            <person name="Agullo L."/>
            <person name="Reyes V.L."/>
            <person name="Hauser L."/>
            <person name="Cordova M."/>
            <person name="Gomez L."/>
            <person name="Gonzalez M."/>
            <person name="Land M."/>
            <person name="Lao V."/>
            <person name="Larimer F."/>
            <person name="LiPuma J.J."/>
            <person name="Mahenthiralingam E."/>
            <person name="Malfatti S.A."/>
            <person name="Marx C.J."/>
            <person name="Parnell J.J."/>
            <person name="Ramette A."/>
            <person name="Richardson P."/>
            <person name="Seeger M."/>
            <person name="Smith D."/>
            <person name="Spilker T."/>
            <person name="Sul W.J."/>
            <person name="Tsoi T.V."/>
            <person name="Ulrich L.E."/>
            <person name="Zhulin I.B."/>
            <person name="Tiedje J.M."/>
        </authorList>
    </citation>
    <scope>NUCLEOTIDE SEQUENCE [LARGE SCALE GENOMIC DNA]</scope>
    <source>
        <strain>LB400</strain>
    </source>
</reference>
<keyword id="KW-0342">GTP-binding</keyword>
<keyword id="KW-0547">Nucleotide-binding</keyword>
<keyword id="KW-1185">Reference proteome</keyword>
<keyword id="KW-0677">Repeat</keyword>
<keyword id="KW-0690">Ribosome biogenesis</keyword>